<feature type="chain" id="PRO_0000252413" description="Double homeobox protein 4">
    <location>
        <begin position="1"/>
        <end position="424"/>
    </location>
</feature>
<feature type="DNA-binding region" description="Homeobox 1" evidence="1 19">
    <location>
        <begin position="19"/>
        <end position="78"/>
    </location>
</feature>
<feature type="DNA-binding region" description="Homeobox 2" evidence="1 19">
    <location>
        <begin position="94"/>
        <end position="153"/>
    </location>
</feature>
<feature type="region of interest" description="Disordered" evidence="2">
    <location>
        <begin position="1"/>
        <end position="24"/>
    </location>
</feature>
<feature type="region of interest" description="Disordered" evidence="2">
    <location>
        <begin position="72"/>
        <end position="102"/>
    </location>
</feature>
<feature type="region of interest" description="Disordered" evidence="2">
    <location>
        <begin position="218"/>
        <end position="362"/>
    </location>
</feature>
<feature type="region of interest" description="Required for interaction with EP300 and CREBBP, and for transcriptional activation of target genes" evidence="10">
    <location>
        <begin position="327"/>
        <end position="424"/>
    </location>
</feature>
<feature type="region of interest" description="Disordered" evidence="2">
    <location>
        <begin position="388"/>
        <end position="414"/>
    </location>
</feature>
<feature type="region of interest" description="Important for transcriptional activation of target genes" evidence="16">
    <location>
        <begin position="405"/>
        <end position="424"/>
    </location>
</feature>
<feature type="compositionally biased region" description="Polar residues" evidence="2">
    <location>
        <begin position="1"/>
        <end position="10"/>
    </location>
</feature>
<feature type="compositionally biased region" description="Basic and acidic residues" evidence="2">
    <location>
        <begin position="265"/>
        <end position="274"/>
    </location>
</feature>
<feature type="compositionally biased region" description="Low complexity" evidence="2">
    <location>
        <begin position="278"/>
        <end position="302"/>
    </location>
</feature>
<feature type="compositionally biased region" description="Low complexity" evidence="2">
    <location>
        <begin position="319"/>
        <end position="329"/>
    </location>
</feature>
<feature type="splice variant" id="VSP_060075" description="In isoform 2.">
    <original>A</original>
    <variation>V</variation>
    <location>
        <position position="160"/>
    </location>
</feature>
<feature type="splice variant" id="VSP_060076" description="In isoform 2.">
    <location>
        <begin position="161"/>
        <end position="424"/>
    </location>
</feature>
<feature type="mutagenesis site" description="Decreased DNA binding affinity." evidence="18">
    <original>R</original>
    <variation>A</variation>
    <location>
        <position position="20"/>
    </location>
</feature>
<feature type="mutagenesis site" description="Mildly decreased DNA binding affinity." evidence="18">
    <original>R</original>
    <variation>A</variation>
    <location>
        <position position="23"/>
    </location>
</feature>
<feature type="mutagenesis site" description="No effect on DNA binding affinity." evidence="18">
    <original>W</original>
    <variation>A</variation>
    <location>
        <position position="26"/>
    </location>
</feature>
<feature type="mutagenesis site" description="Mildly decreased DNA binding affinity." evidence="18">
    <original>N</original>
    <variation>A</variation>
    <location>
        <position position="69"/>
    </location>
</feature>
<feature type="mutagenesis site" description="Decreased DNA binding affinity." evidence="15">
    <original>R</original>
    <variation>A</variation>
    <location>
        <position position="95"/>
    </location>
</feature>
<feature type="mutagenesis site" description="No effect on DNA binding affinity." evidence="18">
    <original>R</original>
    <variation>A</variation>
    <location>
        <position position="95"/>
    </location>
</feature>
<feature type="mutagenesis site" description="Decreased DNA binding affinity." evidence="15">
    <original>R</original>
    <variation>A</variation>
    <location>
        <position position="96"/>
    </location>
</feature>
<feature type="mutagenesis site" description="Decreased DNA binding affinity." evidence="15">
    <original>K</original>
    <variation>A</variation>
    <location>
        <position position="97"/>
    </location>
</feature>
<feature type="mutagenesis site" description="Decreased DNA binding affinity." evidence="15 18">
    <original>R</original>
    <variation>A</variation>
    <location>
        <position position="98"/>
    </location>
</feature>
<feature type="mutagenesis site" description="Decreased DNA binding affinity." evidence="15">
    <original>Q</original>
    <variation>E</variation>
    <location>
        <position position="143"/>
    </location>
</feature>
<feature type="mutagenesis site" description="Decreased DNA binding affinity." evidence="18">
    <original>N</original>
    <variation>A</variation>
    <location>
        <position position="144"/>
    </location>
</feature>
<feature type="mutagenesis site" description="Decreased DNA binding affinity." evidence="15">
    <original>N</original>
    <variation>E</variation>
    <location>
        <position position="144"/>
    </location>
</feature>
<feature type="mutagenesis site" description="Altered sequence specificity, with increased affinity for the DNA sequence 5'-TAATCTAATTA-3'." evidence="19">
    <original>R</original>
    <variation>E</variation>
    <location>
        <position position="145"/>
    </location>
</feature>
<feature type="mutagenesis site" description="Altered sequence specificity, with increased affinity for the DNA sequence 5'-TAATCTAATTA-3'." evidence="19">
    <original>A</original>
    <variation>S</variation>
    <location>
        <position position="147"/>
    </location>
</feature>
<feature type="mutagenesis site" description="Decreased DNA binding affinity." evidence="18">
    <original>R</original>
    <variation>A</variation>
    <location>
        <position position="148"/>
    </location>
</feature>
<feature type="mutagenesis site" description="Decreased DNA binding affinity." evidence="15">
    <original>R</original>
    <variation>E</variation>
    <location>
        <position position="148"/>
    </location>
</feature>
<feature type="mutagenesis site" description="Decreased activity as transcriptional activator." evidence="10">
    <location>
        <begin position="159"/>
        <end position="371"/>
    </location>
</feature>
<feature type="mutagenesis site" description="No effect on activity as transcriptional activator." evidence="10">
    <location>
        <begin position="159"/>
        <end position="326"/>
    </location>
</feature>
<feature type="mutagenesis site" description="No effect on activity as transcriptional activator." evidence="16">
    <location>
        <begin position="160"/>
        <end position="342"/>
    </location>
</feature>
<feature type="mutagenesis site" description="Loss of interaction with EP300 and CREBBP." evidence="10">
    <location>
        <begin position="327"/>
        <end position="424"/>
    </location>
</feature>
<feature type="mutagenesis site" description="Abolishes activity as transcriptional activator." evidence="16">
    <location>
        <begin position="374"/>
        <end position="424"/>
    </location>
</feature>
<feature type="mutagenesis site" description="Reduced activity as transcriptional activator." evidence="16">
    <location>
        <begin position="405"/>
        <end position="424"/>
    </location>
</feature>
<feature type="helix" evidence="34">
    <location>
        <begin position="28"/>
        <end position="40"/>
    </location>
</feature>
<feature type="helix" evidence="34">
    <location>
        <begin position="46"/>
        <end position="56"/>
    </location>
</feature>
<feature type="helix" evidence="34">
    <location>
        <begin position="60"/>
        <end position="81"/>
    </location>
</feature>
<feature type="helix" evidence="33">
    <location>
        <begin position="103"/>
        <end position="113"/>
    </location>
</feature>
<feature type="helix" evidence="33">
    <location>
        <begin position="121"/>
        <end position="131"/>
    </location>
</feature>
<feature type="helix" evidence="33">
    <location>
        <begin position="135"/>
        <end position="148"/>
    </location>
</feature>
<gene>
    <name evidence="26" type="primary">DUX4</name>
    <name type="synonym">DUX10</name>
</gene>
<organism>
    <name type="scientific">Homo sapiens</name>
    <name type="common">Human</name>
    <dbReference type="NCBI Taxonomy" id="9606"/>
    <lineage>
        <taxon>Eukaryota</taxon>
        <taxon>Metazoa</taxon>
        <taxon>Chordata</taxon>
        <taxon>Craniata</taxon>
        <taxon>Vertebrata</taxon>
        <taxon>Euteleostomi</taxon>
        <taxon>Mammalia</taxon>
        <taxon>Eutheria</taxon>
        <taxon>Euarchontoglires</taxon>
        <taxon>Primates</taxon>
        <taxon>Haplorrhini</taxon>
        <taxon>Catarrhini</taxon>
        <taxon>Hominidae</taxon>
        <taxon>Homo</taxon>
    </lineage>
</organism>
<comment type="function">
    <molecule>Isoform 1</molecule>
    <text evidence="5 8 10 11 12 13 14 15 16 17 19 20">Transcription factor that is selectively and transiently expressed in cleavage-stage embryos (PubMed:28459457). Binds to double-stranded DNA elements with the consensus sequence 5'-TAATCTAATCA-3' (PubMed:28459454, PubMed:28459457, PubMed:29572508, PubMed:30315230, PubMed:30540931). Binds to chromatin containing histone H3 acetylated at 'Lys-27' (H3K27ac) and promotes deacetylation of H3K27ac. In parallel, binds to chromatin that lacks histone H3 acetylation at 'Lys-27' (H3K27ac) and recruits EP300 and CREBBP to promote acetylation of histone H3 at 'Lys-27' at new sites (PubMed:26951377). Involved in transcriptional regulation of numerous genes, primarily as transcriptional activator, but also mediates repression of a set of target genes (PubMed:17984056, PubMed:26951377, PubMed:27378237, PubMed:28459454, PubMed:28459457, PubMed:29572508, PubMed:29618456, PubMed:30540931). Promotes expression of ZSCAN4 and KDM4E, two proteins with essential roles during early embryogenesis (PubMed:26951377, PubMed:27378237, PubMed:28459457, PubMed:29618456). Promotes nuclear translocation of CTNNB1/beta-catenin and its subsequent activation of target genes (PubMed:36158201). Heterologous expression in cultured embryonic stem cells mediates transcription of HERVL retrotransposons and transcripts derived from ACRO1 and HSATII satellite repeats (PubMed:28459457). May activate expression of PITX1 (PubMed:17984056). May regulate microRNA (miRNA) expression (PubMed:24145033). Inappropriate expression can inhibit myogenesis and promote apoptosis (PubMed:26951377, PubMed:28935672, PubMed:29618456).</text>
</comment>
<comment type="function">
    <molecule>Isoform 2</molecule>
    <text evidence="16">Probably inactive as a transcriptional activator, due to the absence of the C-terminal region that is important for transcriptional activation. Can inhibit transcriptional activation mediated by isoform 1. Heterologous expression of isoform 2 has no deleterious effect on cell survival.</text>
</comment>
<comment type="subunit">
    <text evidence="10 18 19">Binds DNA as a monomer (PubMed:30322619, PubMed:30540931). Interacts (via C-terminus) with EP300 and CREBBP (PubMed:26951377).</text>
</comment>
<comment type="interaction">
    <interactant intactId="EBI-11600078">
        <id>Q9UBX2</id>
    </interactant>
    <interactant intactId="EBI-1055572">
        <id>P17661</id>
        <label>DES</label>
    </interactant>
    <organismsDiffer>false</organismsDiffer>
    <experiments>3</experiments>
</comment>
<comment type="interaction">
    <interactant intactId="EBI-11600078">
        <id>Q9UBX2</id>
    </interactant>
    <interactant intactId="EBI-298565">
        <id>P31001</id>
        <label>Des</label>
    </interactant>
    <organismsDiffer>true</organismsDiffer>
    <experiments>2</experiments>
</comment>
<comment type="subcellular location">
    <molecule>Isoform 1</molecule>
    <subcellularLocation>
        <location evidence="1 4 5 7 9 10 11 13 16">Nucleus</location>
    </subcellularLocation>
    <subcellularLocation>
        <location evidence="9">Cytoplasm</location>
    </subcellularLocation>
    <text evidence="23">Actively transported through the nuclear pore complex (NPC).</text>
</comment>
<comment type="subcellular location">
    <molecule>Isoform 2</molecule>
    <subcellularLocation>
        <location evidence="16 23">Nucleus</location>
    </subcellularLocation>
</comment>
<comment type="alternative products">
    <event type="alternative splicing"/>
    <isoform>
        <id>Q9UBX2-1</id>
        <name>1</name>
        <name evidence="21">DUX4-fl</name>
        <sequence type="displayed"/>
    </isoform>
    <isoform>
        <id>Q9UBX2-2</id>
        <name>2</name>
        <name evidence="21">DUX4-s</name>
        <sequence type="described" ref="VSP_060075 VSP_060076"/>
    </isoform>
</comment>
<comment type="tissue specificity">
    <text evidence="5 7">Isoform 1: Does not seem to be expressed in normal muscle, but is detected in muscle of individuals with FSHD, and also in testis (at protein level) (PubMed:17984056, PubMed:21060811). Isoform 1: Does not seem to be expressed in normal muscle, but in muscle of individuals with FSHD, where it may be toxic to cells (PubMed:17984056, PubMed:21060811). Isoform 2: Detected in skeletal muscle, fibroblasts and testis from healthy individuals (PubMed:21060811).</text>
</comment>
<comment type="developmental stage">
    <text evidence="7 13">Isoform 1: Detected in embryos at the 4-cell stage. Not detected in embryos at the 2-cell stage, or at the 8-cell stage (at protein level). Detected in embryos at the 4-cell stage. Not detected in embryos at the 2-cell stage, or at the 8-cell stage (PubMed:28459457). Detected in induced pluripotent (iPS) cells, but expression is suppressed upon differentiation to embryoid bodies. Isoform 2: Detected in embryoid bodies derived from induced pluripotent (iPS) cells, but not in the induced pluripotent (iPS) cells themselves (PubMed:21060811).</text>
</comment>
<comment type="domain">
    <text evidence="4 18 19">The two homeobox domains are arranged in a head-to-head orientation when bound to double-stranded DNA, each domain binding to one of the two DNA strands. Together, the homeobox domains can be considered to bind DNA with the consensus sequence 5'-TAATCTAATCA-3', but due to the head-to-head orientation of the DNA-bound domains, the first homeobox domain binds to the consensus sequence 5'-TAAT-3', and the second homeobox domain binds DNA on the opposite strand, with the consensus sequence 5'-TGAT-3' (PubMed:30322619, PubMed:30540931). Both homeobox domains confer nuclear targeting (PubMed:15709750).</text>
</comment>
<comment type="domain">
    <text evidence="10 16">The C-terminal region is required for efficient activation of transcription from target promoters (PubMed:26951377, PubMed:29618456). It mediates interaction with EP300 and CREBBP (PubMed:26951377).</text>
</comment>
<comment type="disease" evidence="3 6">
    <disease id="DI-01545">
        <name>Facioscapulohumeral muscular dystrophy 1</name>
        <acronym>FSHD1</acronym>
        <description>A degenerative muscle disease characterized by slowly progressive weakness of the muscles of the face, upper-arm, and shoulder girdle. The onset of symptoms usually occurs in the first or second decade of life. Affected individuals usually present with impairment of upper extremity elevation. This tends to be followed by facial weakness, primarily involving the orbicularis oris and orbicularis oculi muscles.</description>
        <dbReference type="MIM" id="158900"/>
    </disease>
    <text evidence="6">The gene represented in this entry is involved in disease pathogenesis. The disease is caused by deletion of an integral number of units of a 3.3-kb tandem repeats, termed D4Z4 macrosatellite, located on chromosome 4q35. In unaffected subjects, the D4Z4 array consists of 11-150 repeats, while in FSHD1 patients, the array is reduced to 1-10 repeats (PubMed:19320656). DUX4 is located in D4Z4 macrosatellite which is epigenetically repressed in somatic tissues. D4Z4 chromatin relaxation in FSHD1 results in inefficient epigenetic repression of DUX4 and a variegated pattern of DUX4 protein expression in a subset of skeletal muscle nuclei. Ectopic expression of DUX4 in skeletal muscle activates the expression of stem cell and germline genes, and, when overexpressed in somatic cells, DUX4 can ultimately lead to cell death.</text>
</comment>
<comment type="miscellaneous">
    <text evidence="3 5 6 7">DUX genes are present in 3.3-kilobase elements, a tandem repeat family scattered in the genome found on the short arms of all acrocentric chromosomes as well as on several other chromosomes.</text>
</comment>
<comment type="similarity">
    <text evidence="22">Belongs to the paired homeobox family.</text>
</comment>
<name>DUX4_HUMAN</name>
<sequence>MALPTPSDSTLPAEARGRGRRRRLVWTPSQSEALRACFERNPYPGIATRERLAQAIGIPEPRVQIWFQNERSRQLRQHRRESRPWPGRRGPPEGRRKRTAVTGSQTALLLRAFEKDRFPGIAAREELARETGLPESRIQIWFQNRRARHPGQGGRAPAQAGGLCSAAPGGGHPAPSWVAFAHTGAWGTGLPAPHVPCAPGALPQGAFVSQAARAAPALQPSQAAPAEGISQPAPARGDFAYAAPAPPDGALSHPQAPRWPPHPGKSREDRDPQRDGLPGPCAVAQPGPAQAGPQGQGVLAPPTSQGSPWWGWGRGPQVAGAAWEPQAGAAPPPQPAPPDASASARQGQMQGIPAPSQALQEPAPWSALPCGLLLDELLASPEFLQQAQPLLETEAPGELEASEEAASLEAPLSEEEYRALLEEL</sequence>
<dbReference type="EMBL" id="AF117653">
    <property type="protein sequence ID" value="AAD54067.2"/>
    <property type="molecule type" value="Genomic_DNA"/>
</dbReference>
<dbReference type="EMBL" id="HQ266762">
    <property type="protein sequence ID" value="ADN68617.1"/>
    <property type="molecule type" value="mRNA"/>
</dbReference>
<dbReference type="EMBL" id="AF117653">
    <property type="protein sequence ID" value="AAD54068.2"/>
    <property type="molecule type" value="Genomic_DNA"/>
</dbReference>
<dbReference type="EMBL" id="AY044051">
    <property type="protein sequence ID" value="AAK91509.1"/>
    <property type="molecule type" value="Genomic_DNA"/>
</dbReference>
<dbReference type="EMBL" id="AC215524">
    <property type="status" value="NOT_ANNOTATED_CDS"/>
    <property type="molecule type" value="Genomic_DNA"/>
</dbReference>
<dbReference type="CCDS" id="CCDS77990.1">
    <molecule id="Q9UBX2-1"/>
</dbReference>
<dbReference type="CCDS" id="CCDS93681.1">
    <molecule id="Q9UBX2-2"/>
</dbReference>
<dbReference type="RefSeq" id="NP_001280727.1">
    <molecule id="Q9UBX2-1"/>
    <property type="nucleotide sequence ID" value="NM_001293798.3"/>
</dbReference>
<dbReference type="RefSeq" id="NP_001292997.1">
    <molecule id="Q9UBX2-1"/>
    <property type="nucleotide sequence ID" value="NM_001306068.3"/>
</dbReference>
<dbReference type="RefSeq" id="NP_001350749.1">
    <molecule id="Q9UBX2-2"/>
    <property type="nucleotide sequence ID" value="NM_001363820.2"/>
</dbReference>
<dbReference type="RefSeq" id="XP_011529816.1">
    <property type="nucleotide sequence ID" value="XM_011531514.2"/>
</dbReference>
<dbReference type="RefSeq" id="XP_016885822.1">
    <property type="nucleotide sequence ID" value="XM_017030333.1"/>
</dbReference>
<dbReference type="RefSeq" id="XP_016885823.1">
    <property type="nucleotide sequence ID" value="XM_017030334.1"/>
</dbReference>
<dbReference type="RefSeq" id="XP_016885824.1">
    <property type="nucleotide sequence ID" value="XM_017030335.1"/>
</dbReference>
<dbReference type="RefSeq" id="XP_016885825.1">
    <property type="nucleotide sequence ID" value="XM_017030336.1"/>
</dbReference>
<dbReference type="RefSeq" id="XP_016885826.1">
    <property type="nucleotide sequence ID" value="XM_017030337.1"/>
</dbReference>
<dbReference type="RefSeq" id="XP_016885827.1">
    <property type="nucleotide sequence ID" value="XM_017030338.1"/>
</dbReference>
<dbReference type="RefSeq" id="XP_016885828.1">
    <property type="nucleotide sequence ID" value="XM_017030339.1"/>
</dbReference>
<dbReference type="RefSeq" id="XP_016885829.1">
    <property type="nucleotide sequence ID" value="XM_017030340.1"/>
</dbReference>
<dbReference type="PDB" id="5Z2S">
    <property type="method" value="X-ray"/>
    <property type="resolution" value="1.50 A"/>
    <property type="chains" value="A=100-150"/>
</dbReference>
<dbReference type="PDB" id="5Z2T">
    <property type="method" value="X-ray"/>
    <property type="resolution" value="2.62 A"/>
    <property type="chains" value="C/D=94-153"/>
</dbReference>
<dbReference type="PDB" id="5Z6Z">
    <property type="method" value="X-ray"/>
    <property type="resolution" value="2.30 A"/>
    <property type="chains" value="A=1-153"/>
</dbReference>
<dbReference type="PDB" id="5ZFW">
    <property type="method" value="X-ray"/>
    <property type="resolution" value="2.10 A"/>
    <property type="chains" value="A=1-149"/>
</dbReference>
<dbReference type="PDB" id="5ZFY">
    <property type="method" value="X-ray"/>
    <property type="resolution" value="2.30 A"/>
    <property type="chains" value="A=1-149"/>
</dbReference>
<dbReference type="PDB" id="5ZFZ">
    <property type="method" value="X-ray"/>
    <property type="resolution" value="1.90 A"/>
    <property type="chains" value="A=1-149"/>
</dbReference>
<dbReference type="PDB" id="6A8R">
    <property type="method" value="X-ray"/>
    <property type="resolution" value="1.60 A"/>
    <property type="chains" value="A/B=94-153"/>
</dbReference>
<dbReference type="PDB" id="6DFY">
    <property type="method" value="X-ray"/>
    <property type="resolution" value="2.62 A"/>
    <property type="chains" value="C/D=94-153"/>
</dbReference>
<dbReference type="PDB" id="6E8C">
    <property type="method" value="X-ray"/>
    <property type="resolution" value="2.12 A"/>
    <property type="chains" value="A=17-155"/>
</dbReference>
<dbReference type="PDB" id="6U81">
    <property type="method" value="X-ray"/>
    <property type="resolution" value="2.34 A"/>
    <property type="chains" value="A=19-150"/>
</dbReference>
<dbReference type="PDB" id="6U82">
    <property type="method" value="X-ray"/>
    <property type="resolution" value="3.21 A"/>
    <property type="chains" value="A/D=17-150"/>
</dbReference>
<dbReference type="PDBsum" id="5Z2S"/>
<dbReference type="PDBsum" id="5Z2T"/>
<dbReference type="PDBsum" id="5Z6Z"/>
<dbReference type="PDBsum" id="5ZFW"/>
<dbReference type="PDBsum" id="5ZFY"/>
<dbReference type="PDBsum" id="5ZFZ"/>
<dbReference type="PDBsum" id="6A8R"/>
<dbReference type="PDBsum" id="6DFY"/>
<dbReference type="PDBsum" id="6E8C"/>
<dbReference type="PDBsum" id="6U81"/>
<dbReference type="PDBsum" id="6U82"/>
<dbReference type="SMR" id="Q9UBX2"/>
<dbReference type="BioGRID" id="940343">
    <property type="interactions" value="259"/>
</dbReference>
<dbReference type="FunCoup" id="Q9UBX2">
    <property type="interactions" value="82"/>
</dbReference>
<dbReference type="IntAct" id="Q9UBX2">
    <property type="interactions" value="285"/>
</dbReference>
<dbReference type="TCDB" id="1.I.1.1.3">
    <property type="family name" value="the nuclear pore complex (npc) family"/>
</dbReference>
<dbReference type="GlyGen" id="Q9UBX2">
    <property type="glycosylation" value="1 site"/>
</dbReference>
<dbReference type="iPTMnet" id="Q9UBX2"/>
<dbReference type="PhosphoSitePlus" id="Q9UBX2"/>
<dbReference type="BioMuta" id="DUX4"/>
<dbReference type="DMDM" id="74720085"/>
<dbReference type="MassIVE" id="Q9UBX2"/>
<dbReference type="PeptideAtlas" id="Q9UBX2"/>
<dbReference type="Antibodypedia" id="73101">
    <property type="antibodies" value="292 antibodies from 23 providers"/>
</dbReference>
<dbReference type="DNASU" id="100288687"/>
<dbReference type="Ensembl" id="ENST00000565211.1">
    <molecule id="Q9UBX2-1"/>
    <property type="protein sequence ID" value="ENSP00000458065.1"/>
    <property type="gene ID" value="ENSG00000260596.5"/>
</dbReference>
<dbReference type="Ensembl" id="ENST00000569241.5">
    <molecule id="Q9UBX2-1"/>
    <property type="protein sequence ID" value="ENSP00000456539.1"/>
    <property type="gene ID" value="ENSG00000260596.5"/>
</dbReference>
<dbReference type="Ensembl" id="ENST00000570263.5">
    <molecule id="Q9UBX2-2"/>
    <property type="protein sequence ID" value="ENSP00000455112.1"/>
    <property type="gene ID" value="ENSG00000260596.5"/>
</dbReference>
<dbReference type="Ensembl" id="ENST00000616166.1">
    <molecule id="Q9UBX2-1"/>
    <property type="protein sequence ID" value="ENSP00000483555.1"/>
    <property type="gene ID" value="ENSG00000260596.5"/>
</dbReference>
<dbReference type="Ensembl" id="ENST00000637517.3">
    <molecule id="Q9UBX2-1"/>
    <property type="protein sequence ID" value="ENSP00000489958.1"/>
    <property type="gene ID" value="ENSG00000283949.3"/>
</dbReference>
<dbReference type="Ensembl" id="ENST00000710433.1">
    <molecule id="Q9UBX2-1"/>
    <property type="protein sequence ID" value="ENSP00000518267.1"/>
    <property type="gene ID" value="ENSG00000283949.3"/>
</dbReference>
<dbReference type="Ensembl" id="ENST00000710434.1">
    <molecule id="Q9UBX2-2"/>
    <property type="protein sequence ID" value="ENSP00000518268.1"/>
    <property type="gene ID" value="ENSG00000283949.3"/>
</dbReference>
<dbReference type="GeneID" id="100288687"/>
<dbReference type="KEGG" id="hsa:100288687"/>
<dbReference type="MANE-Select" id="ENST00000565211.1">
    <property type="protein sequence ID" value="ENSP00000458065.1"/>
    <property type="RefSeq nucleotide sequence ID" value="NM_001306068.3"/>
    <property type="RefSeq protein sequence ID" value="NP_001292997.1"/>
</dbReference>
<dbReference type="UCSC" id="uc031tgs.2">
    <molecule id="Q9UBX2-1"/>
    <property type="organism name" value="human"/>
</dbReference>
<dbReference type="UCSC" id="uc063bru.1">
    <property type="organism name" value="human"/>
</dbReference>
<dbReference type="AGR" id="HGNC:50800"/>
<dbReference type="CTD" id="100288687"/>
<dbReference type="DisGeNET" id="100288687"/>
<dbReference type="GeneCards" id="DUX4"/>
<dbReference type="GeneReviews" id="DUX4"/>
<dbReference type="HGNC" id="HGNC:50800">
    <property type="gene designation" value="DUX4"/>
</dbReference>
<dbReference type="HPA" id="ENSG00000260596">
    <property type="expression patterns" value="Not detected"/>
</dbReference>
<dbReference type="MalaCards" id="DUX4"/>
<dbReference type="MIM" id="158900">
    <property type="type" value="phenotype"/>
</dbReference>
<dbReference type="MIM" id="606009">
    <property type="type" value="gene"/>
</dbReference>
<dbReference type="neXtProt" id="NX_Q9UBX2"/>
<dbReference type="OpenTargets" id="ENSG00000260596"/>
<dbReference type="Orphanet" id="269">
    <property type="disease" value="Facioscapulohumeral dystrophy"/>
</dbReference>
<dbReference type="VEuPathDB" id="HostDB:ENSG00000260596"/>
<dbReference type="eggNOG" id="KOG0849">
    <property type="taxonomic scope" value="Eukaryota"/>
</dbReference>
<dbReference type="GeneTree" id="ENSGT00940000154537"/>
<dbReference type="HOGENOM" id="CLU_045070_0_0_1"/>
<dbReference type="InParanoid" id="Q9UBX2"/>
<dbReference type="OMA" id="QTCFERN"/>
<dbReference type="PAN-GO" id="Q9UBX2">
    <property type="GO annotations" value="4 GO annotations based on evolutionary models"/>
</dbReference>
<dbReference type="PhylomeDB" id="Q9UBX2"/>
<dbReference type="PathwayCommons" id="Q9UBX2"/>
<dbReference type="Reactome" id="R-HSA-9819196">
    <property type="pathway name" value="Zygotic genome activation (ZGA)"/>
</dbReference>
<dbReference type="SignaLink" id="Q9UBX2"/>
<dbReference type="SIGNOR" id="Q9UBX2"/>
<dbReference type="BioGRID-ORCS" id="100288687">
    <property type="hits" value="13 hits in 113 CRISPR screens"/>
</dbReference>
<dbReference type="ChiTaRS" id="DUX4">
    <property type="organism name" value="human"/>
</dbReference>
<dbReference type="GenomeRNAi" id="100288687"/>
<dbReference type="Pharos" id="Q9UBX2">
    <property type="development level" value="Tbio"/>
</dbReference>
<dbReference type="PRO" id="PR:Q9UBX2"/>
<dbReference type="Proteomes" id="UP000005640">
    <property type="component" value="Chromosome 4"/>
</dbReference>
<dbReference type="RNAct" id="Q9UBX2">
    <property type="molecule type" value="protein"/>
</dbReference>
<dbReference type="Bgee" id="ENSG00000260596">
    <property type="expression patterns" value="Expressed in primordial germ cell in gonad and 60 other cell types or tissues"/>
</dbReference>
<dbReference type="ExpressionAtlas" id="Q9UBX2">
    <property type="expression patterns" value="baseline and differential"/>
</dbReference>
<dbReference type="GO" id="GO:0005737">
    <property type="term" value="C:cytoplasm"/>
    <property type="evidence" value="ECO:0000314"/>
    <property type="project" value="UniProtKB"/>
</dbReference>
<dbReference type="GO" id="GO:0005829">
    <property type="term" value="C:cytosol"/>
    <property type="evidence" value="ECO:0000314"/>
    <property type="project" value="HPA"/>
</dbReference>
<dbReference type="GO" id="GO:0005794">
    <property type="term" value="C:Golgi apparatus"/>
    <property type="evidence" value="ECO:0000314"/>
    <property type="project" value="HPA"/>
</dbReference>
<dbReference type="GO" id="GO:0031965">
    <property type="term" value="C:nuclear membrane"/>
    <property type="evidence" value="ECO:0000314"/>
    <property type="project" value="UniProtKB"/>
</dbReference>
<dbReference type="GO" id="GO:0005730">
    <property type="term" value="C:nucleolus"/>
    <property type="evidence" value="ECO:0000314"/>
    <property type="project" value="HPA"/>
</dbReference>
<dbReference type="GO" id="GO:0005654">
    <property type="term" value="C:nucleoplasm"/>
    <property type="evidence" value="ECO:0000314"/>
    <property type="project" value="HPA"/>
</dbReference>
<dbReference type="GO" id="GO:0005634">
    <property type="term" value="C:nucleus"/>
    <property type="evidence" value="ECO:0000314"/>
    <property type="project" value="UniProtKB"/>
</dbReference>
<dbReference type="GO" id="GO:0001228">
    <property type="term" value="F:DNA-binding transcription activator activity, RNA polymerase II-specific"/>
    <property type="evidence" value="ECO:0000314"/>
    <property type="project" value="UniProtKB"/>
</dbReference>
<dbReference type="GO" id="GO:0000981">
    <property type="term" value="F:DNA-binding transcription factor activity, RNA polymerase II-specific"/>
    <property type="evidence" value="ECO:0000318"/>
    <property type="project" value="GO_Central"/>
</dbReference>
<dbReference type="GO" id="GO:0000978">
    <property type="term" value="F:RNA polymerase II cis-regulatory region sequence-specific DNA binding"/>
    <property type="evidence" value="ECO:0000314"/>
    <property type="project" value="NTNU_SB"/>
</dbReference>
<dbReference type="GO" id="GO:0000977">
    <property type="term" value="F:RNA polymerase II transcription regulatory region sequence-specific DNA binding"/>
    <property type="evidence" value="ECO:0000318"/>
    <property type="project" value="GO_Central"/>
</dbReference>
<dbReference type="GO" id="GO:1990837">
    <property type="term" value="F:sequence-specific double-stranded DNA binding"/>
    <property type="evidence" value="ECO:0000314"/>
    <property type="project" value="UniProtKB"/>
</dbReference>
<dbReference type="GO" id="GO:0000976">
    <property type="term" value="F:transcription cis-regulatory region binding"/>
    <property type="evidence" value="ECO:0000314"/>
    <property type="project" value="UniProtKB"/>
</dbReference>
<dbReference type="GO" id="GO:0006915">
    <property type="term" value="P:apoptotic process"/>
    <property type="evidence" value="ECO:0000314"/>
    <property type="project" value="UniProtKB"/>
</dbReference>
<dbReference type="GO" id="GO:0008285">
    <property type="term" value="P:negative regulation of cell population proliferation"/>
    <property type="evidence" value="ECO:0000315"/>
    <property type="project" value="UniProtKB"/>
</dbReference>
<dbReference type="GO" id="GO:0070317">
    <property type="term" value="P:negative regulation of G0 to G1 transition"/>
    <property type="evidence" value="ECO:0000314"/>
    <property type="project" value="UniProtKB"/>
</dbReference>
<dbReference type="GO" id="GO:0045944">
    <property type="term" value="P:positive regulation of transcription by RNA polymerase II"/>
    <property type="evidence" value="ECO:0000314"/>
    <property type="project" value="UniProtKB"/>
</dbReference>
<dbReference type="GO" id="GO:0006357">
    <property type="term" value="P:regulation of transcription by RNA polymerase II"/>
    <property type="evidence" value="ECO:0000318"/>
    <property type="project" value="GO_Central"/>
</dbReference>
<dbReference type="CDD" id="cd00086">
    <property type="entry name" value="homeodomain"/>
    <property type="match status" value="2"/>
</dbReference>
<dbReference type="FunFam" id="1.10.10.60:FF:000325">
    <property type="entry name" value="Double homeobox protein 4"/>
    <property type="match status" value="1"/>
</dbReference>
<dbReference type="FunFam" id="1.10.10.60:FF:000354">
    <property type="entry name" value="Double homeobox protein 4"/>
    <property type="match status" value="1"/>
</dbReference>
<dbReference type="Gene3D" id="1.10.10.60">
    <property type="entry name" value="Homeodomain-like"/>
    <property type="match status" value="2"/>
</dbReference>
<dbReference type="InterPro" id="IPR001356">
    <property type="entry name" value="HD"/>
</dbReference>
<dbReference type="InterPro" id="IPR051306">
    <property type="entry name" value="Homeobox_regulator"/>
</dbReference>
<dbReference type="InterPro" id="IPR009057">
    <property type="entry name" value="Homeodomain-like_sf"/>
</dbReference>
<dbReference type="InterPro" id="IPR000047">
    <property type="entry name" value="HTH_motif"/>
</dbReference>
<dbReference type="PANTHER" id="PTHR46123:SF3">
    <property type="entry name" value="DOUBLE HOMEOBOX PROTEIN 1-RELATED"/>
    <property type="match status" value="1"/>
</dbReference>
<dbReference type="PANTHER" id="PTHR46123">
    <property type="entry name" value="MIX-TYPE HOMEOBOX GENE 1-RELATED"/>
    <property type="match status" value="1"/>
</dbReference>
<dbReference type="Pfam" id="PF00046">
    <property type="entry name" value="Homeodomain"/>
    <property type="match status" value="2"/>
</dbReference>
<dbReference type="PRINTS" id="PR00031">
    <property type="entry name" value="HTHREPRESSR"/>
</dbReference>
<dbReference type="SMART" id="SM00389">
    <property type="entry name" value="HOX"/>
    <property type="match status" value="2"/>
</dbReference>
<dbReference type="SUPFAM" id="SSF46689">
    <property type="entry name" value="Homeodomain-like"/>
    <property type="match status" value="2"/>
</dbReference>
<dbReference type="PROSITE" id="PS50071">
    <property type="entry name" value="HOMEOBOX_2"/>
    <property type="match status" value="2"/>
</dbReference>
<evidence type="ECO:0000255" key="1">
    <source>
        <dbReference type="PROSITE-ProRule" id="PRU00108"/>
    </source>
</evidence>
<evidence type="ECO:0000256" key="2">
    <source>
        <dbReference type="SAM" id="MobiDB-lite"/>
    </source>
</evidence>
<evidence type="ECO:0000269" key="3">
    <source>
    </source>
</evidence>
<evidence type="ECO:0000269" key="4">
    <source>
    </source>
</evidence>
<evidence type="ECO:0000269" key="5">
    <source>
    </source>
</evidence>
<evidence type="ECO:0000269" key="6">
    <source>
    </source>
</evidence>
<evidence type="ECO:0000269" key="7">
    <source>
    </source>
</evidence>
<evidence type="ECO:0000269" key="8">
    <source>
    </source>
</evidence>
<evidence type="ECO:0000269" key="9">
    <source>
    </source>
</evidence>
<evidence type="ECO:0000269" key="10">
    <source>
    </source>
</evidence>
<evidence type="ECO:0000269" key="11">
    <source>
    </source>
</evidence>
<evidence type="ECO:0000269" key="12">
    <source>
    </source>
</evidence>
<evidence type="ECO:0000269" key="13">
    <source>
    </source>
</evidence>
<evidence type="ECO:0000269" key="14">
    <source>
    </source>
</evidence>
<evidence type="ECO:0000269" key="15">
    <source>
    </source>
</evidence>
<evidence type="ECO:0000269" key="16">
    <source>
    </source>
</evidence>
<evidence type="ECO:0000269" key="17">
    <source>
    </source>
</evidence>
<evidence type="ECO:0000269" key="18">
    <source>
    </source>
</evidence>
<evidence type="ECO:0000269" key="19">
    <source>
    </source>
</evidence>
<evidence type="ECO:0000269" key="20">
    <source>
    </source>
</evidence>
<evidence type="ECO:0000303" key="21">
    <source>
    </source>
</evidence>
<evidence type="ECO:0000305" key="22"/>
<evidence type="ECO:0000305" key="23">
    <source>
    </source>
</evidence>
<evidence type="ECO:0000312" key="24">
    <source>
        <dbReference type="EMBL" id="AAK91509.1"/>
    </source>
</evidence>
<evidence type="ECO:0000312" key="25">
    <source>
        <dbReference type="EMBL" id="ADN68617.1"/>
    </source>
</evidence>
<evidence type="ECO:0000312" key="26">
    <source>
        <dbReference type="HGNC" id="HGNC:50800"/>
    </source>
</evidence>
<evidence type="ECO:0007744" key="27">
    <source>
        <dbReference type="PDB" id="5Z2S"/>
    </source>
</evidence>
<evidence type="ECO:0007744" key="28">
    <source>
        <dbReference type="PDB" id="5Z2T"/>
    </source>
</evidence>
<evidence type="ECO:0007744" key="29">
    <source>
        <dbReference type="PDB" id="5Z6Z"/>
    </source>
</evidence>
<evidence type="ECO:0007744" key="30">
    <source>
        <dbReference type="PDB" id="6A8R"/>
    </source>
</evidence>
<evidence type="ECO:0007744" key="31">
    <source>
        <dbReference type="PDB" id="6DFY"/>
    </source>
</evidence>
<evidence type="ECO:0007744" key="32">
    <source>
        <dbReference type="PDB" id="6E8C"/>
    </source>
</evidence>
<evidence type="ECO:0007829" key="33">
    <source>
        <dbReference type="PDB" id="5Z2S"/>
    </source>
</evidence>
<evidence type="ECO:0007829" key="34">
    <source>
        <dbReference type="PDB" id="5ZFZ"/>
    </source>
</evidence>
<proteinExistence type="evidence at protein level"/>
<accession>Q9UBX2</accession>
<accession>E2JJS1</accession>
<keyword id="KW-0002">3D-structure</keyword>
<keyword id="KW-0010">Activator</keyword>
<keyword id="KW-0025">Alternative splicing</keyword>
<keyword id="KW-0963">Cytoplasm</keyword>
<keyword id="KW-0217">Developmental protein</keyword>
<keyword id="KW-0238">DNA-binding</keyword>
<keyword id="KW-0371">Homeobox</keyword>
<keyword id="KW-0539">Nucleus</keyword>
<keyword id="KW-1185">Reference proteome</keyword>
<keyword id="KW-0677">Repeat</keyword>
<keyword id="KW-0804">Transcription</keyword>
<keyword id="KW-0805">Transcription regulation</keyword>
<protein>
    <recommendedName>
        <fullName evidence="26">Double homeobox protein 4</fullName>
    </recommendedName>
    <alternativeName>
        <fullName evidence="24">Double homeobox protein 10</fullName>
    </alternativeName>
</protein>
<reference key="1">
    <citation type="journal article" date="1999" name="Gene">
        <title>Nucleotide sequence of the partially deleted D4Z4 locus in a patient with FSHD identifies a putative gene within each 3.3 kb element.</title>
        <authorList>
            <person name="Gabrieels J."/>
            <person name="Beckers M.-C."/>
            <person name="Ding H."/>
            <person name="De Vriese A."/>
            <person name="Plaisance S."/>
            <person name="van der Maarel S.M."/>
            <person name="Padberg G.W."/>
            <person name="Frants R.R."/>
            <person name="Hewitt J.E."/>
            <person name="Collen D."/>
            <person name="Belayew A."/>
        </authorList>
    </citation>
    <scope>NUCLEOTIDE SEQUENCE [GENOMIC DNA]</scope>
    <scope>INVOLVEMENT IN FSHD1</scope>
</reference>
<reference evidence="25" key="2">
    <citation type="journal article" date="2010" name="PLoS Genet.">
        <title>Facioscapulohumeral dystrophy: incomplete suppression of a retrotransposed gene.</title>
        <authorList>
            <person name="Snider L."/>
            <person name="Geng L.N."/>
            <person name="Lemmers R.J."/>
            <person name="Kyba M."/>
            <person name="Ware C.B."/>
            <person name="Nelson A.M."/>
            <person name="Tawil R."/>
            <person name="Filippova G.N."/>
            <person name="van der Maarel S.M."/>
            <person name="Tapscott S.J."/>
            <person name="Miller D.G."/>
        </authorList>
    </citation>
    <scope>NUCLEOTIDE SEQUENCE [MRNA] (ISOFORM 2)</scope>
    <scope>ALTERNATIVE SPLICING</scope>
    <scope>SUBCELLULAR LOCATION</scope>
    <scope>TISSUE SPECIFICITY</scope>
    <scope>DEVELOPMENTAL STAGE (ISOFORMS 1 AND 2)</scope>
    <source>
        <tissue evidence="25">Skeletal muscle</tissue>
    </source>
</reference>
<reference key="3">
    <citation type="submission" date="2001-06" db="EMBL/GenBank/DDBJ databases">
        <title>A subtelomeric exchange between chromosomes 4q35 and 10q26 observed in a patient with FSHD maintains a double homeobox (DUX) gene within the 3.3 kb repeats of the D4Z4 locus.</title>
        <authorList>
            <person name="Leclercq I."/>
            <person name="Matteotti C."/>
            <person name="Deneubourg G."/>
            <person name="Leo O."/>
            <person name="Van der Maarel S.M."/>
            <person name="Frants R.R."/>
            <person name="Padberg G.W."/>
            <person name="Coppee F."/>
            <person name="Belayew A."/>
        </authorList>
    </citation>
    <scope>NUCLEOTIDE SEQUENCE [GENOMIC DNA]</scope>
</reference>
<reference key="4">
    <citation type="journal article" date="2005" name="Nature">
        <title>Generation and annotation of the DNA sequences of human chromosomes 2 and 4.</title>
        <authorList>
            <person name="Hillier L.W."/>
            <person name="Graves T.A."/>
            <person name="Fulton R.S."/>
            <person name="Fulton L.A."/>
            <person name="Pepin K.H."/>
            <person name="Minx P."/>
            <person name="Wagner-McPherson C."/>
            <person name="Layman D."/>
            <person name="Wylie K."/>
            <person name="Sekhon M."/>
            <person name="Becker M.C."/>
            <person name="Fewell G.A."/>
            <person name="Delehaunty K.D."/>
            <person name="Miner T.L."/>
            <person name="Nash W.E."/>
            <person name="Kremitzki C."/>
            <person name="Oddy L."/>
            <person name="Du H."/>
            <person name="Sun H."/>
            <person name="Bradshaw-Cordum H."/>
            <person name="Ali J."/>
            <person name="Carter J."/>
            <person name="Cordes M."/>
            <person name="Harris A."/>
            <person name="Isak A."/>
            <person name="van Brunt A."/>
            <person name="Nguyen C."/>
            <person name="Du F."/>
            <person name="Courtney L."/>
            <person name="Kalicki J."/>
            <person name="Ozersky P."/>
            <person name="Abbott S."/>
            <person name="Armstrong J."/>
            <person name="Belter E.A."/>
            <person name="Caruso L."/>
            <person name="Cedroni M."/>
            <person name="Cotton M."/>
            <person name="Davidson T."/>
            <person name="Desai A."/>
            <person name="Elliott G."/>
            <person name="Erb T."/>
            <person name="Fronick C."/>
            <person name="Gaige T."/>
            <person name="Haakenson W."/>
            <person name="Haglund K."/>
            <person name="Holmes A."/>
            <person name="Harkins R."/>
            <person name="Kim K."/>
            <person name="Kruchowski S.S."/>
            <person name="Strong C.M."/>
            <person name="Grewal N."/>
            <person name="Goyea E."/>
            <person name="Hou S."/>
            <person name="Levy A."/>
            <person name="Martinka S."/>
            <person name="Mead K."/>
            <person name="McLellan M.D."/>
            <person name="Meyer R."/>
            <person name="Randall-Maher J."/>
            <person name="Tomlinson C."/>
            <person name="Dauphin-Kohlberg S."/>
            <person name="Kozlowicz-Reilly A."/>
            <person name="Shah N."/>
            <person name="Swearengen-Shahid S."/>
            <person name="Snider J."/>
            <person name="Strong J.T."/>
            <person name="Thompson J."/>
            <person name="Yoakum M."/>
            <person name="Leonard S."/>
            <person name="Pearman C."/>
            <person name="Trani L."/>
            <person name="Radionenko M."/>
            <person name="Waligorski J.E."/>
            <person name="Wang C."/>
            <person name="Rock S.M."/>
            <person name="Tin-Wollam A.-M."/>
            <person name="Maupin R."/>
            <person name="Latreille P."/>
            <person name="Wendl M.C."/>
            <person name="Yang S.-P."/>
            <person name="Pohl C."/>
            <person name="Wallis J.W."/>
            <person name="Spieth J."/>
            <person name="Bieri T.A."/>
            <person name="Berkowicz N."/>
            <person name="Nelson J.O."/>
            <person name="Osborne J."/>
            <person name="Ding L."/>
            <person name="Meyer R."/>
            <person name="Sabo A."/>
            <person name="Shotland Y."/>
            <person name="Sinha P."/>
            <person name="Wohldmann P.E."/>
            <person name="Cook L.L."/>
            <person name="Hickenbotham M.T."/>
            <person name="Eldred J."/>
            <person name="Williams D."/>
            <person name="Jones T.A."/>
            <person name="She X."/>
            <person name="Ciccarelli F.D."/>
            <person name="Izaurralde E."/>
            <person name="Taylor J."/>
            <person name="Schmutz J."/>
            <person name="Myers R.M."/>
            <person name="Cox D.R."/>
            <person name="Huang X."/>
            <person name="McPherson J.D."/>
            <person name="Mardis E.R."/>
            <person name="Clifton S.W."/>
            <person name="Warren W.C."/>
            <person name="Chinwalla A.T."/>
            <person name="Eddy S.R."/>
            <person name="Marra M.A."/>
            <person name="Ovcharenko I."/>
            <person name="Furey T.S."/>
            <person name="Miller W."/>
            <person name="Eichler E.E."/>
            <person name="Bork P."/>
            <person name="Suyama M."/>
            <person name="Torrents D."/>
            <person name="Waterston R.H."/>
            <person name="Wilson R.K."/>
        </authorList>
    </citation>
    <scope>NUCLEOTIDE SEQUENCE [LARGE SCALE GENOMIC DNA]</scope>
</reference>
<reference key="5">
    <citation type="journal article" date="2005" name="Biochemistry">
        <title>Intracellular trafficking and dynamics of double homeodomain proteins.</title>
        <authorList>
            <person name="Oestlund C."/>
            <person name="Garcia-Carrasquillo R.M."/>
            <person name="Belayew A."/>
            <person name="Worman H.J."/>
        </authorList>
    </citation>
    <scope>SUBCELLULAR LOCATION</scope>
</reference>
<reference key="6">
    <citation type="journal article" date="2007" name="Proc. Natl. Acad. Sci. U.S.A.">
        <title>DUX4, a candidate gene of facioscapulohumeral muscular dystrophy, encodes a transcriptional activator of PITX1.</title>
        <authorList>
            <person name="Dixit M."/>
            <person name="Ansseau E."/>
            <person name="Tassin A."/>
            <person name="Winokur S."/>
            <person name="Shi R."/>
            <person name="Qian H."/>
            <person name="Sauvage S."/>
            <person name="Matteotti C."/>
            <person name="van Acker A.M."/>
            <person name="Leo O."/>
            <person name="Figlewicz D."/>
            <person name="Barro M."/>
            <person name="Laoudj-Chenivesse D."/>
            <person name="Belayew A."/>
            <person name="Coppee F."/>
            <person name="Chen Y.W."/>
        </authorList>
    </citation>
    <scope>FUNCTION</scope>
    <scope>SUBCELLULAR LOCATION</scope>
    <scope>TISSUE SPECIFICITY</scope>
</reference>
<reference key="7">
    <citation type="journal article" date="2009" name="Clin. Genet.">
        <title>Facioscapulohumeral muscular dystrophy: epidemiological and molecular study in a north-east Italian population sample.</title>
        <authorList>
            <person name="Mostacciuolo M.L."/>
            <person name="Pastorello E."/>
            <person name="Vazza G."/>
            <person name="Miorin M."/>
            <person name="Angelini C."/>
            <person name="Tomelleri G."/>
            <person name="Galluzzi G."/>
            <person name="Trevisan C.P."/>
        </authorList>
    </citation>
    <scope>INVOLVEMENT IN FSHD1</scope>
</reference>
<reference key="8">
    <citation type="journal article" date="2013" name="J. Biol. Chem.">
        <title>Defective regulation of microRNA target genes in myoblasts from facioscapulohumeral dystrophy patients.</title>
        <authorList>
            <person name="Dmitriev P."/>
            <person name="Stankevicins L."/>
            <person name="Ansseau E."/>
            <person name="Petrov A."/>
            <person name="Barat A."/>
            <person name="Dessen P."/>
            <person name="Robert T."/>
            <person name="Turki A."/>
            <person name="Lazar V."/>
            <person name="Labourer E."/>
            <person name="Belayew A."/>
            <person name="Carnac G."/>
            <person name="Laoudj-Chenivesse D."/>
            <person name="Lipinski M."/>
            <person name="Vassetzky Y.S."/>
        </authorList>
    </citation>
    <scope>FUNCTION</scope>
</reference>
<reference key="9">
    <citation type="journal article" date="2016" name="Mol. Ther.">
        <title>Morpholino-mediated Knockdown of DUX4 Toward Facioscapulohumeral Muscular Dystrophy Therapeutics.</title>
        <authorList>
            <person name="Chen J.C."/>
            <person name="King O.D."/>
            <person name="Zhang Y."/>
            <person name="Clayton N.P."/>
            <person name="Spencer C."/>
            <person name="Wentworth B.M."/>
            <person name="Emerson C.P. Jr."/>
            <person name="Wagner K.R."/>
        </authorList>
    </citation>
    <scope>FUNCTION</scope>
    <scope>SUBCELLULAR LOCATION</scope>
</reference>
<reference key="10">
    <citation type="journal article" date="2016" name="Nucleic Acids Res.">
        <title>DUX4 recruits p300/CBP through its C-terminus and induces global H3K27 acetylation changes.</title>
        <authorList>
            <person name="Choi S.H."/>
            <person name="Gearhart M.D."/>
            <person name="Cui Z."/>
            <person name="Bosnakovski D."/>
            <person name="Kim M."/>
            <person name="Schennum N."/>
            <person name="Kyba M."/>
        </authorList>
    </citation>
    <scope>FUNCTION</scope>
    <scope>INTERACTION WITH EP300 AND CREBBP</scope>
    <scope>DOMAIN</scope>
    <scope>SUBCELLULAR LOCATION</scope>
    <scope>MUTAGENESIS OF 159-GLN--GLN-326; 159-GLN--GLY-371 AND 327-ALA--LEU-424</scope>
</reference>
<reference key="11">
    <citation type="journal article" date="2016" name="PLoS ONE">
        <title>Homologous Transcription Factors DUX4 and DUX4c Associate with Cytoplasmic Proteins during Muscle Differentiation.</title>
        <authorList>
            <person name="Ansseau E."/>
            <person name="Eidahl J.O."/>
            <person name="Lancelot C."/>
            <person name="Tassin A."/>
            <person name="Matteotti C."/>
            <person name="Yip C."/>
            <person name="Liu J."/>
            <person name="Leroy B."/>
            <person name="Hubeau C."/>
            <person name="Gerbaux C."/>
            <person name="Cloet S."/>
            <person name="Wauters A."/>
            <person name="Zorbo S."/>
            <person name="Meyer P."/>
            <person name="Pirson I."/>
            <person name="Laoudj-Chenivesse D."/>
            <person name="Wattiez R."/>
            <person name="Harper S.Q."/>
            <person name="Belayew A."/>
            <person name="Coppee F."/>
        </authorList>
    </citation>
    <scope>SUBCELLULAR LOCATION</scope>
</reference>
<reference key="12">
    <citation type="journal article" date="2017" name="J. Cell Sci.">
        <title>The DUX4 homeodomains mediate inhibition of myogenesis and are functionally exchangeable with the Pax7 homeodomain.</title>
        <authorList>
            <person name="Bosnakovski D."/>
            <person name="Toso E.A."/>
            <person name="Hartweck L.M."/>
            <person name="Magli A."/>
            <person name="Lee H.A."/>
            <person name="Thompson E.R."/>
            <person name="Dandapat A."/>
            <person name="Perlingeiro R.C.R."/>
            <person name="Kyba M."/>
        </authorList>
    </citation>
    <scope>FUNCTION</scope>
</reference>
<reference key="13">
    <citation type="journal article" date="2017" name="Nat. Genet.">
        <title>Conserved roles of mouse DUX and human DUX4 in activating cleavage-stage genes and MERVL/HERVL retrotransposons.</title>
        <authorList>
            <person name="Hendrickson P.G."/>
            <person name="Dorais J.A."/>
            <person name="Grow E.J."/>
            <person name="Whiddon J.L."/>
            <person name="Lim J.W."/>
            <person name="Wike C.L."/>
            <person name="Weaver B.D."/>
            <person name="Pflueger C."/>
            <person name="Emery B.R."/>
            <person name="Wilcox A.L."/>
            <person name="Nix D.A."/>
            <person name="Peterson C.M."/>
            <person name="Tapscott S.J."/>
            <person name="Carrell D.T."/>
            <person name="Cairns B.R."/>
        </authorList>
    </citation>
    <scope>FUNCTION</scope>
    <scope>DEVELOPMENTAL STAGE</scope>
    <scope>SUBCELLULAR LOCATION</scope>
</reference>
<reference key="14">
    <citation type="journal article" date="2017" name="Nat. Genet.">
        <title>Conservation and innovation in the DUX4-family gene network.</title>
        <authorList>
            <person name="Whiddon J.L."/>
            <person name="Langford A.T."/>
            <person name="Wong C.J."/>
            <person name="Zhong J.W."/>
            <person name="Tapscott S.J."/>
        </authorList>
    </citation>
    <scope>FUNCTION</scope>
</reference>
<reference key="15">
    <citation type="journal article" date="2018" name="Biol. Open">
        <title>Functional domains of the FSHD-associated DUX4 protein.</title>
        <authorList>
            <person name="Mitsuhashi H."/>
            <person name="Ishimaru S."/>
            <person name="Homma S."/>
            <person name="Yu B."/>
            <person name="Honma Y."/>
            <person name="Beermann M.L."/>
            <person name="Miller J.B."/>
        </authorList>
    </citation>
    <scope>FUNCTION (ISOFORMS 1 AND 2)</scope>
    <scope>SUBCELLULAR LOCATION (ISOFORMS 1 AND 2)</scope>
    <scope>DOMAIN</scope>
    <scope>MUTAGENESIS OF 160-ALA--ALA-342; 374-LEU--LEU-424 AND 405-ALA--LEU-424</scope>
</reference>
<reference key="16">
    <citation type="journal article" date="2022" name="Front. Cell Dev. Biol.">
        <title>Antagonism Between DUX4 and DUX4c Highlights a Pathomechanism Operating Through beta-Catenin in Facioscapulohumeral Muscular Dystrophy.</title>
        <authorList>
            <person name="Ganassi M."/>
            <person name="Figeac N."/>
            <person name="Reynaud M."/>
            <person name="Ortuste Quiroga H.P."/>
            <person name="Zammit P.S."/>
        </authorList>
    </citation>
    <scope>FUNCTION</scope>
</reference>
<reference evidence="29" key="17">
    <citation type="journal article" date="2018" name="Biochem. Biophys. Res. Commun.">
        <title>Structural basis for multiple gene regulation by human DUX4.</title>
        <authorList>
            <person name="Li Y."/>
            <person name="Wu B."/>
            <person name="Liu H."/>
            <person name="Gao Y."/>
            <person name="Yang C."/>
            <person name="Chen X."/>
            <person name="Zhang J."/>
            <person name="Chen Y."/>
            <person name="Gu Y."/>
            <person name="Li J."/>
            <person name="Ma J."/>
            <person name="Gan J."/>
        </authorList>
    </citation>
    <scope>X-RAY CRYSTALLOGRAPHY (2.30 ANGSTROMS) OF 1-153 IN COMPLEX WITH DNA</scope>
    <scope>SUBUNIT</scope>
    <scope>DOMAIN</scope>
    <scope>MUTAGENESIS OF ARG-20; ARG-23; TRP-26; ASN-69; ARG-95; ARG-98; ASN-144 AND ARG-148</scope>
</reference>
<reference evidence="32" key="18">
    <citation type="journal article" date="2018" name="Cell Rep.">
        <title>Crystal Structure of the Double Homeodomain of DUX4 in Complex with DNA.</title>
        <authorList>
            <person name="Lee J.K."/>
            <person name="Bosnakovski D."/>
            <person name="Toso E.A."/>
            <person name="Dinh T."/>
            <person name="Banerjee S."/>
            <person name="Bohl T.E."/>
            <person name="Shi K."/>
            <person name="Orellana K."/>
            <person name="Kyba M."/>
            <person name="Aihara H."/>
        </authorList>
    </citation>
    <scope>X-RAY CRYSTALLOGRAPHY (2.12 ANGSTROMS) OF 17-155 IN COMPLEX WITH DNA</scope>
    <scope>FUNCTION</scope>
    <scope>SUBUNIT</scope>
    <scope>DOMAIN</scope>
    <scope>MUTAGENESIS OF ARG-145 AND ALA-147</scope>
</reference>
<reference evidence="27 28" key="19">
    <citation type="journal article" date="2018" name="Leukemia">
        <title>Structural basis of DUX4/IGH-driven transactivation.</title>
        <authorList>
            <person name="Dong X."/>
            <person name="Zhang W."/>
            <person name="Wu H."/>
            <person name="Huang J."/>
            <person name="Zhang M."/>
            <person name="Wang P."/>
            <person name="Zhang H."/>
            <person name="Chen Z."/>
            <person name="Chen S.J."/>
            <person name="Meng G."/>
        </authorList>
    </citation>
    <scope>X-RAY CRYSTALLOGRAPHY (1.50 ANGSTROMS) OF 100-150 IN COMPLEX WITH DNA</scope>
    <scope>FUNCTION</scope>
    <scope>MUTAGENESIS OF ARG-95; ARG-96; LYS-97; ARG-98; GLN-143; ASN-144 AND ARG-148</scope>
</reference>
<reference evidence="31" key="20">
    <citation type="journal article" date="2018" name="Leukemia">
        <title>Comment on structural basis of DUX4/IGH-driven transactivation.</title>
        <authorList>
            <person name="Aihara H."/>
            <person name="Shi K."/>
            <person name="Lee J.K."/>
            <person name="Bosnakovski D."/>
            <person name="Kyba M."/>
        </authorList>
    </citation>
    <scope>X-RAY CRYSTALLOGRAPHY (2.62 ANGSTROMS) OF 94-153 IN COMPLEX WITH DNA</scope>
</reference>
<reference evidence="30" key="21">
    <citation type="journal article" date="2019" name="Leukemia">
        <title>DUX4HD2-DNAERG structure reveals new insight into DUX4-Responsive-Element.</title>
        <authorList>
            <person name="Dong X."/>
            <person name="Zhang H."/>
            <person name="Cheng N."/>
            <person name="Li K."/>
            <person name="Meng G."/>
        </authorList>
    </citation>
    <scope>X-RAY CRYSTALLOGRAPHY (1.60 ANGSTROMS) OF 94-153 IN COMPLEX WITH DNA</scope>
    <scope>FUNCTION</scope>
</reference>